<sequence>MSINIVTLVGRVGTDPDIKYFESGSVKCRLTLAVNRRSKNDKPDWFTLELWDKTAEVAGNYVRKGSLIGVKGSLKFDSWSDRQTGVNRSTPVIRVDQLELLGSKQDRDGGSSDFAPENF</sequence>
<comment type="subunit">
    <text evidence="1">Homotetramer.</text>
</comment>
<accession>P0A4K0</accession>
<accession>Q8Z0K3</accession>
<name>SSB1_NOSS1</name>
<keyword id="KW-0238">DNA-binding</keyword>
<keyword id="KW-1185">Reference proteome</keyword>
<organism>
    <name type="scientific">Nostoc sp. (strain PCC 7120 / SAG 25.82 / UTEX 2576)</name>
    <dbReference type="NCBI Taxonomy" id="103690"/>
    <lineage>
        <taxon>Bacteria</taxon>
        <taxon>Bacillati</taxon>
        <taxon>Cyanobacteriota</taxon>
        <taxon>Cyanophyceae</taxon>
        <taxon>Nostocales</taxon>
        <taxon>Nostocaceae</taxon>
        <taxon>Nostoc</taxon>
    </lineage>
</organism>
<evidence type="ECO:0000255" key="1">
    <source>
        <dbReference type="HAMAP-Rule" id="MF_00984"/>
    </source>
</evidence>
<reference key="1">
    <citation type="journal article" date="2001" name="DNA Res.">
        <title>Complete genomic sequence of the filamentous nitrogen-fixing cyanobacterium Anabaena sp. strain PCC 7120.</title>
        <authorList>
            <person name="Kaneko T."/>
            <person name="Nakamura Y."/>
            <person name="Wolk C.P."/>
            <person name="Kuritz T."/>
            <person name="Sasamoto S."/>
            <person name="Watanabe A."/>
            <person name="Iriguchi M."/>
            <person name="Ishikawa A."/>
            <person name="Kawashima K."/>
            <person name="Kimura T."/>
            <person name="Kishida Y."/>
            <person name="Kohara M."/>
            <person name="Matsumoto M."/>
            <person name="Matsuno A."/>
            <person name="Muraki A."/>
            <person name="Nakazaki N."/>
            <person name="Shimpo S."/>
            <person name="Sugimoto M."/>
            <person name="Takazawa M."/>
            <person name="Yamada M."/>
            <person name="Yasuda M."/>
            <person name="Tabata S."/>
        </authorList>
    </citation>
    <scope>NUCLEOTIDE SEQUENCE [LARGE SCALE GENOMIC DNA]</scope>
    <source>
        <strain>PCC 7120 / SAG 25.82 / UTEX 2576</strain>
    </source>
</reference>
<feature type="chain" id="PRO_0000095996" description="Single-stranded DNA-binding protein 1">
    <location>
        <begin position="1"/>
        <end position="119"/>
    </location>
</feature>
<feature type="domain" description="SSB" evidence="1">
    <location>
        <begin position="3"/>
        <end position="102"/>
    </location>
</feature>
<gene>
    <name type="primary">ssb1</name>
    <name type="ordered locus">alr0088</name>
</gene>
<dbReference type="EMBL" id="BA000019">
    <property type="protein sequence ID" value="BAB77612.1"/>
    <property type="molecule type" value="Genomic_DNA"/>
</dbReference>
<dbReference type="PIR" id="AH1817">
    <property type="entry name" value="AH1817"/>
</dbReference>
<dbReference type="RefSeq" id="WP_010994265.1">
    <property type="nucleotide sequence ID" value="NZ_RSCN01000016.1"/>
</dbReference>
<dbReference type="SMR" id="P0A4K0"/>
<dbReference type="STRING" id="103690.gene:10492092"/>
<dbReference type="KEGG" id="ana:alr0088"/>
<dbReference type="eggNOG" id="COG0629">
    <property type="taxonomic scope" value="Bacteria"/>
</dbReference>
<dbReference type="OrthoDB" id="9809878at2"/>
<dbReference type="Proteomes" id="UP000002483">
    <property type="component" value="Chromosome"/>
</dbReference>
<dbReference type="GO" id="GO:0009295">
    <property type="term" value="C:nucleoid"/>
    <property type="evidence" value="ECO:0007669"/>
    <property type="project" value="TreeGrafter"/>
</dbReference>
<dbReference type="GO" id="GO:0003697">
    <property type="term" value="F:single-stranded DNA binding"/>
    <property type="evidence" value="ECO:0007669"/>
    <property type="project" value="UniProtKB-UniRule"/>
</dbReference>
<dbReference type="GO" id="GO:0006260">
    <property type="term" value="P:DNA replication"/>
    <property type="evidence" value="ECO:0007669"/>
    <property type="project" value="InterPro"/>
</dbReference>
<dbReference type="CDD" id="cd04496">
    <property type="entry name" value="SSB_OBF"/>
    <property type="match status" value="1"/>
</dbReference>
<dbReference type="Gene3D" id="2.40.50.140">
    <property type="entry name" value="Nucleic acid-binding proteins"/>
    <property type="match status" value="1"/>
</dbReference>
<dbReference type="HAMAP" id="MF_00984">
    <property type="entry name" value="SSB"/>
    <property type="match status" value="1"/>
</dbReference>
<dbReference type="InterPro" id="IPR012340">
    <property type="entry name" value="NA-bd_OB-fold"/>
</dbReference>
<dbReference type="InterPro" id="IPR000424">
    <property type="entry name" value="Primosome_PriB/ssb"/>
</dbReference>
<dbReference type="InterPro" id="IPR011344">
    <property type="entry name" value="ssDNA-bd"/>
</dbReference>
<dbReference type="NCBIfam" id="NF005674">
    <property type="entry name" value="PRK07459.1"/>
    <property type="match status" value="1"/>
</dbReference>
<dbReference type="NCBIfam" id="TIGR00621">
    <property type="entry name" value="ssb"/>
    <property type="match status" value="1"/>
</dbReference>
<dbReference type="PANTHER" id="PTHR10302">
    <property type="entry name" value="SINGLE-STRANDED DNA-BINDING PROTEIN"/>
    <property type="match status" value="1"/>
</dbReference>
<dbReference type="PANTHER" id="PTHR10302:SF0">
    <property type="entry name" value="SINGLE-STRANDED DNA-BINDING PROTEIN, MITOCHONDRIAL"/>
    <property type="match status" value="1"/>
</dbReference>
<dbReference type="Pfam" id="PF00436">
    <property type="entry name" value="SSB"/>
    <property type="match status" value="1"/>
</dbReference>
<dbReference type="PIRSF" id="PIRSF002070">
    <property type="entry name" value="SSB"/>
    <property type="match status" value="1"/>
</dbReference>
<dbReference type="SUPFAM" id="SSF50249">
    <property type="entry name" value="Nucleic acid-binding proteins"/>
    <property type="match status" value="1"/>
</dbReference>
<dbReference type="PROSITE" id="PS50935">
    <property type="entry name" value="SSB"/>
    <property type="match status" value="1"/>
</dbReference>
<proteinExistence type="inferred from homology"/>
<protein>
    <recommendedName>
        <fullName evidence="1">Single-stranded DNA-binding protein 1</fullName>
        <shortName evidence="1">SSB 1</shortName>
    </recommendedName>
</protein>